<evidence type="ECO:0000255" key="1"/>
<evidence type="ECO:0000269" key="2">
    <source>
    </source>
</evidence>
<evidence type="ECO:0000303" key="3">
    <source>
    </source>
</evidence>
<evidence type="ECO:0000305" key="4"/>
<evidence type="ECO:0000312" key="5">
    <source>
        <dbReference type="EMBL" id="ABD32018.1"/>
    </source>
</evidence>
<keyword id="KW-1003">Cell membrane</keyword>
<keyword id="KW-0406">Ion transport</keyword>
<keyword id="KW-0472">Membrane</keyword>
<keyword id="KW-0533">Nickel</keyword>
<keyword id="KW-0921">Nickel transport</keyword>
<keyword id="KW-1185">Reference proteome</keyword>
<keyword id="KW-0812">Transmembrane</keyword>
<keyword id="KW-1133">Transmembrane helix</keyword>
<keyword id="KW-0813">Transport</keyword>
<protein>
    <recommendedName>
        <fullName evidence="4">Nickel transporter NixA</fullName>
    </recommendedName>
</protein>
<organism>
    <name type="scientific">Staphylococcus aureus (strain NCTC 8325 / PS 47)</name>
    <dbReference type="NCBI Taxonomy" id="93061"/>
    <lineage>
        <taxon>Bacteria</taxon>
        <taxon>Bacillati</taxon>
        <taxon>Bacillota</taxon>
        <taxon>Bacilli</taxon>
        <taxon>Bacillales</taxon>
        <taxon>Staphylococcaceae</taxon>
        <taxon>Staphylococcus</taxon>
    </lineage>
</organism>
<comment type="function">
    <text evidence="2">Secondary nickel transporter. Required for full urease activity.</text>
</comment>
<comment type="subcellular location">
    <subcellularLocation>
        <location evidence="4">Cell membrane</location>
        <topology evidence="1">Multi-pass membrane protein</topology>
    </subcellularLocation>
</comment>
<comment type="induction">
    <text evidence="2">Transiently induced in response to mild-acid conditions.</text>
</comment>
<comment type="disruption phenotype">
    <text evidence="2">Deletion mutant is impaired in its capacity to accumulate nickel. Nickel accumulation and urease activity are almost completely abolished in a nixA-nikA double mutant.</text>
</comment>
<comment type="similarity">
    <text evidence="4">Belongs to the NiCoT transporter (TC 2.A.52) family.</text>
</comment>
<dbReference type="EMBL" id="CP000253">
    <property type="protein sequence ID" value="ABD32018.1"/>
    <property type="molecule type" value="Genomic_DNA"/>
</dbReference>
<dbReference type="RefSeq" id="WP_000215642.1">
    <property type="nucleotide sequence ID" value="NZ_LS483365.1"/>
</dbReference>
<dbReference type="RefSeq" id="YP_501481.1">
    <property type="nucleotide sequence ID" value="NC_007795.1"/>
</dbReference>
<dbReference type="STRING" id="93061.SAOUHSC_03033"/>
<dbReference type="PaxDb" id="1280-SAXN108_2971"/>
<dbReference type="GeneID" id="3921299"/>
<dbReference type="KEGG" id="sao:SAOUHSC_03033"/>
<dbReference type="PATRIC" id="fig|93061.5.peg.2740"/>
<dbReference type="eggNOG" id="COG3376">
    <property type="taxonomic scope" value="Bacteria"/>
</dbReference>
<dbReference type="HOGENOM" id="CLU_036094_2_0_9"/>
<dbReference type="OrthoDB" id="9776706at2"/>
<dbReference type="Proteomes" id="UP000008816">
    <property type="component" value="Chromosome"/>
</dbReference>
<dbReference type="GO" id="GO:0005886">
    <property type="term" value="C:plasma membrane"/>
    <property type="evidence" value="ECO:0007669"/>
    <property type="project" value="UniProtKB-SubCell"/>
</dbReference>
<dbReference type="GO" id="GO:0044750">
    <property type="term" value="F:high-affinity nickel cation transmembrane transporter activity"/>
    <property type="evidence" value="ECO:0000318"/>
    <property type="project" value="GO_Central"/>
</dbReference>
<dbReference type="GO" id="GO:0098716">
    <property type="term" value="P:nickel cation import across plasma membrane"/>
    <property type="evidence" value="ECO:0000318"/>
    <property type="project" value="GO_Central"/>
</dbReference>
<dbReference type="InterPro" id="IPR004688">
    <property type="entry name" value="Ni/Co_transpt"/>
</dbReference>
<dbReference type="InterPro" id="IPR011541">
    <property type="entry name" value="Ni/Co_transpt_high_affinity"/>
</dbReference>
<dbReference type="NCBIfam" id="TIGR00802">
    <property type="entry name" value="nico"/>
    <property type="match status" value="1"/>
</dbReference>
<dbReference type="PANTHER" id="PTHR31611">
    <property type="entry name" value="HIGH-AFFINITY NICKEL TRANSPORT PROTEIN NIC1"/>
    <property type="match status" value="1"/>
</dbReference>
<dbReference type="PANTHER" id="PTHR31611:SF0">
    <property type="entry name" value="HIGH-AFFINITY NICKEL TRANSPORT PROTEIN NIC1"/>
    <property type="match status" value="1"/>
</dbReference>
<dbReference type="Pfam" id="PF03824">
    <property type="entry name" value="NicO"/>
    <property type="match status" value="1"/>
</dbReference>
<feature type="chain" id="PRO_0000447264" description="Nickel transporter NixA">
    <location>
        <begin position="1"/>
        <end position="338"/>
    </location>
</feature>
<feature type="transmembrane region" description="Helical" evidence="1">
    <location>
        <begin position="11"/>
        <end position="31"/>
    </location>
</feature>
<feature type="transmembrane region" description="Helical" evidence="1">
    <location>
        <begin position="37"/>
        <end position="57"/>
    </location>
</feature>
<feature type="transmembrane region" description="Helical" evidence="1">
    <location>
        <begin position="79"/>
        <end position="99"/>
    </location>
</feature>
<feature type="transmembrane region" description="Helical" evidence="1">
    <location>
        <begin position="127"/>
        <end position="147"/>
    </location>
</feature>
<feature type="transmembrane region" description="Helical" evidence="1">
    <location>
        <begin position="187"/>
        <end position="207"/>
    </location>
</feature>
<feature type="transmembrane region" description="Helical" evidence="1">
    <location>
        <begin position="217"/>
        <end position="237"/>
    </location>
</feature>
<feature type="transmembrane region" description="Helical" evidence="1">
    <location>
        <begin position="266"/>
        <end position="286"/>
    </location>
</feature>
<feature type="transmembrane region" description="Helical" evidence="1">
    <location>
        <begin position="307"/>
        <end position="327"/>
    </location>
</feature>
<proteinExistence type="evidence at protein level"/>
<reference key="1">
    <citation type="book" date="2006" name="Gram positive pathogens, 2nd edition">
        <title>The Staphylococcus aureus NCTC 8325 genome.</title>
        <editorList>
            <person name="Fischetti V."/>
            <person name="Novick R."/>
            <person name="Ferretti J."/>
            <person name="Portnoy D."/>
            <person name="Rood J."/>
        </editorList>
        <authorList>
            <person name="Gillaspy A.F."/>
            <person name="Worrell V."/>
            <person name="Orvis J."/>
            <person name="Roe B.A."/>
            <person name="Dyer D.W."/>
            <person name="Iandolo J.J."/>
        </authorList>
    </citation>
    <scope>NUCLEOTIDE SEQUENCE [LARGE SCALE GENOMIC DNA]</scope>
    <source>
        <strain>NCTC 8325 / PS 47</strain>
    </source>
</reference>
<reference key="2">
    <citation type="journal article" date="2010" name="Mol. Microbiol.">
        <title>A nickel ABC-transporter of Staphylococcus aureus is involved in urinary tract infection.</title>
        <authorList>
            <person name="Hiron A."/>
            <person name="Posteraro B."/>
            <person name="Carriere M."/>
            <person name="Remy L."/>
            <person name="Delporte C."/>
            <person name="La Sorda M."/>
            <person name="Sanguinetti M."/>
            <person name="Juillard V."/>
            <person name="Borezee-Durant E."/>
        </authorList>
    </citation>
    <scope>FUNCTION IN NICKEL TRANSPORT</scope>
    <scope>INDUCTION</scope>
    <scope>DISRUPTION PHENOTYPE</scope>
    <source>
        <strain>RN6390</strain>
    </source>
</reference>
<accession>Q2FUR9</accession>
<gene>
    <name evidence="3" type="primary">nixA</name>
    <name evidence="5" type="ordered locus">SAOUHSC_03033</name>
</gene>
<sequence length="338" mass="37830">MTVFKNERLSWLPYIAIVILLHVIGFSFLWIAGKDHHILFGMGILAYTLGLRHAFDADHIAAIDNTVRKLLQQRKDPSGVGFYFSIGHSSVVFLMAVFLGVSVKWAKDELPHFQDIGGTIGTLVSGFFLVLIGVLNLIILISLINLFAKLRREHIEEAEVDALLESRGLVSRFVGPYFKLITRSWHVLPLGFLFGLGFDTASEIALLALSSGASQQAISFIGILSLPILFASGMSLLDTLDGVVMKYAYNWAFFNPIRKIYYNITITAISVMAALVIGMIELLQILADKLDLHGAFWAFIGSIEFDYLGYILVALFLITWLISSLIWKFGRIEHKWSR</sequence>
<name>NIXA_STAA8</name>